<sequence length="277" mass="29876">MGIKVYKPTTNGRRNMTSLDFAEITTSTPEKSLLVSLKSKAGRNNNGRITVRHQGGGHKRHYRLIDFKRNKDGVEAVVKTIEYDPNRTANIALVHYTDGVKAYIIAPKGLEVGQRIVSGPDADIKVGNALPLANIPVGTVVHNIELKPGKGGELVRAAGASAQVLGQEGKYVLVRLQSGEVRMILGTCRATIGTVGNEQQSLVNIGKAGRSRWKGIRPTVRGSVMNPNDHPHGGGEGKAPVGRKAPSTPWGKPALGLKTRNKKAKSDKLIVRRRNEK</sequence>
<proteinExistence type="inferred from homology"/>
<gene>
    <name evidence="1" type="primary">rplB</name>
    <name type="ordered locus">spyM18_0053</name>
</gene>
<dbReference type="EMBL" id="AE009949">
    <property type="protein sequence ID" value="AAL96879.1"/>
    <property type="molecule type" value="Genomic_DNA"/>
</dbReference>
<dbReference type="RefSeq" id="WP_002986654.1">
    <property type="nucleotide sequence ID" value="NC_003485.1"/>
</dbReference>
<dbReference type="SMR" id="P60435"/>
<dbReference type="GeneID" id="83689570"/>
<dbReference type="KEGG" id="spm:spyM18_0053"/>
<dbReference type="HOGENOM" id="CLU_036235_2_1_9"/>
<dbReference type="GO" id="GO:0015934">
    <property type="term" value="C:large ribosomal subunit"/>
    <property type="evidence" value="ECO:0007669"/>
    <property type="project" value="InterPro"/>
</dbReference>
<dbReference type="GO" id="GO:0019843">
    <property type="term" value="F:rRNA binding"/>
    <property type="evidence" value="ECO:0007669"/>
    <property type="project" value="UniProtKB-UniRule"/>
</dbReference>
<dbReference type="GO" id="GO:0003735">
    <property type="term" value="F:structural constituent of ribosome"/>
    <property type="evidence" value="ECO:0007669"/>
    <property type="project" value="InterPro"/>
</dbReference>
<dbReference type="GO" id="GO:0016740">
    <property type="term" value="F:transferase activity"/>
    <property type="evidence" value="ECO:0007669"/>
    <property type="project" value="InterPro"/>
</dbReference>
<dbReference type="GO" id="GO:0002181">
    <property type="term" value="P:cytoplasmic translation"/>
    <property type="evidence" value="ECO:0007669"/>
    <property type="project" value="TreeGrafter"/>
</dbReference>
<dbReference type="FunFam" id="2.30.30.30:FF:000001">
    <property type="entry name" value="50S ribosomal protein L2"/>
    <property type="match status" value="1"/>
</dbReference>
<dbReference type="FunFam" id="2.40.50.140:FF:000003">
    <property type="entry name" value="50S ribosomal protein L2"/>
    <property type="match status" value="1"/>
</dbReference>
<dbReference type="FunFam" id="4.10.950.10:FF:000001">
    <property type="entry name" value="50S ribosomal protein L2"/>
    <property type="match status" value="1"/>
</dbReference>
<dbReference type="Gene3D" id="2.30.30.30">
    <property type="match status" value="1"/>
</dbReference>
<dbReference type="Gene3D" id="2.40.50.140">
    <property type="entry name" value="Nucleic acid-binding proteins"/>
    <property type="match status" value="1"/>
</dbReference>
<dbReference type="Gene3D" id="4.10.950.10">
    <property type="entry name" value="Ribosomal protein L2, domain 3"/>
    <property type="match status" value="1"/>
</dbReference>
<dbReference type="HAMAP" id="MF_01320_B">
    <property type="entry name" value="Ribosomal_uL2_B"/>
    <property type="match status" value="1"/>
</dbReference>
<dbReference type="InterPro" id="IPR012340">
    <property type="entry name" value="NA-bd_OB-fold"/>
</dbReference>
<dbReference type="InterPro" id="IPR014722">
    <property type="entry name" value="Rib_uL2_dom2"/>
</dbReference>
<dbReference type="InterPro" id="IPR002171">
    <property type="entry name" value="Ribosomal_uL2"/>
</dbReference>
<dbReference type="InterPro" id="IPR005880">
    <property type="entry name" value="Ribosomal_uL2_bac/org-type"/>
</dbReference>
<dbReference type="InterPro" id="IPR022669">
    <property type="entry name" value="Ribosomal_uL2_C"/>
</dbReference>
<dbReference type="InterPro" id="IPR022671">
    <property type="entry name" value="Ribosomal_uL2_CS"/>
</dbReference>
<dbReference type="InterPro" id="IPR014726">
    <property type="entry name" value="Ribosomal_uL2_dom3"/>
</dbReference>
<dbReference type="InterPro" id="IPR022666">
    <property type="entry name" value="Ribosomal_uL2_RNA-bd_dom"/>
</dbReference>
<dbReference type="InterPro" id="IPR008991">
    <property type="entry name" value="Translation_prot_SH3-like_sf"/>
</dbReference>
<dbReference type="NCBIfam" id="TIGR01171">
    <property type="entry name" value="rplB_bact"/>
    <property type="match status" value="1"/>
</dbReference>
<dbReference type="PANTHER" id="PTHR13691:SF5">
    <property type="entry name" value="LARGE RIBOSOMAL SUBUNIT PROTEIN UL2M"/>
    <property type="match status" value="1"/>
</dbReference>
<dbReference type="PANTHER" id="PTHR13691">
    <property type="entry name" value="RIBOSOMAL PROTEIN L2"/>
    <property type="match status" value="1"/>
</dbReference>
<dbReference type="Pfam" id="PF00181">
    <property type="entry name" value="Ribosomal_L2"/>
    <property type="match status" value="1"/>
</dbReference>
<dbReference type="Pfam" id="PF03947">
    <property type="entry name" value="Ribosomal_L2_C"/>
    <property type="match status" value="1"/>
</dbReference>
<dbReference type="PIRSF" id="PIRSF002158">
    <property type="entry name" value="Ribosomal_L2"/>
    <property type="match status" value="1"/>
</dbReference>
<dbReference type="SMART" id="SM01383">
    <property type="entry name" value="Ribosomal_L2"/>
    <property type="match status" value="1"/>
</dbReference>
<dbReference type="SMART" id="SM01382">
    <property type="entry name" value="Ribosomal_L2_C"/>
    <property type="match status" value="1"/>
</dbReference>
<dbReference type="SUPFAM" id="SSF50249">
    <property type="entry name" value="Nucleic acid-binding proteins"/>
    <property type="match status" value="1"/>
</dbReference>
<dbReference type="SUPFAM" id="SSF50104">
    <property type="entry name" value="Translation proteins SH3-like domain"/>
    <property type="match status" value="1"/>
</dbReference>
<dbReference type="PROSITE" id="PS00467">
    <property type="entry name" value="RIBOSOMAL_L2"/>
    <property type="match status" value="1"/>
</dbReference>
<evidence type="ECO:0000255" key="1">
    <source>
        <dbReference type="HAMAP-Rule" id="MF_01320"/>
    </source>
</evidence>
<evidence type="ECO:0000256" key="2">
    <source>
        <dbReference type="SAM" id="MobiDB-lite"/>
    </source>
</evidence>
<evidence type="ECO:0000305" key="3"/>
<feature type="chain" id="PRO_0000129635" description="Large ribosomal subunit protein uL2">
    <location>
        <begin position="1"/>
        <end position="277"/>
    </location>
</feature>
<feature type="region of interest" description="Disordered" evidence="2">
    <location>
        <begin position="219"/>
        <end position="277"/>
    </location>
</feature>
<feature type="compositionally biased region" description="Basic and acidic residues" evidence="2">
    <location>
        <begin position="264"/>
        <end position="277"/>
    </location>
</feature>
<organism>
    <name type="scientific">Streptococcus pyogenes serotype M18 (strain MGAS8232)</name>
    <dbReference type="NCBI Taxonomy" id="186103"/>
    <lineage>
        <taxon>Bacteria</taxon>
        <taxon>Bacillati</taxon>
        <taxon>Bacillota</taxon>
        <taxon>Bacilli</taxon>
        <taxon>Lactobacillales</taxon>
        <taxon>Streptococcaceae</taxon>
        <taxon>Streptococcus</taxon>
    </lineage>
</organism>
<name>RL2_STRP8</name>
<protein>
    <recommendedName>
        <fullName evidence="1">Large ribosomal subunit protein uL2</fullName>
    </recommendedName>
    <alternativeName>
        <fullName evidence="3">50S ribosomal protein L2</fullName>
    </alternativeName>
</protein>
<keyword id="KW-0687">Ribonucleoprotein</keyword>
<keyword id="KW-0689">Ribosomal protein</keyword>
<keyword id="KW-0694">RNA-binding</keyword>
<keyword id="KW-0699">rRNA-binding</keyword>
<reference key="1">
    <citation type="journal article" date="2002" name="Proc. Natl. Acad. Sci. U.S.A.">
        <title>Genome sequence and comparative microarray analysis of serotype M18 group A Streptococcus strains associated with acute rheumatic fever outbreaks.</title>
        <authorList>
            <person name="Smoot J.C."/>
            <person name="Barbian K.D."/>
            <person name="Van Gompel J.J."/>
            <person name="Smoot L.M."/>
            <person name="Chaussee M.S."/>
            <person name="Sylva G.L."/>
            <person name="Sturdevant D.E."/>
            <person name="Ricklefs S.M."/>
            <person name="Porcella S.F."/>
            <person name="Parkins L.D."/>
            <person name="Beres S.B."/>
            <person name="Campbell D.S."/>
            <person name="Smith T.M."/>
            <person name="Zhang Q."/>
            <person name="Kapur V."/>
            <person name="Daly J.A."/>
            <person name="Veasy L.G."/>
            <person name="Musser J.M."/>
        </authorList>
    </citation>
    <scope>NUCLEOTIDE SEQUENCE [LARGE SCALE GENOMIC DNA]</scope>
    <source>
        <strain>MGAS8232</strain>
    </source>
</reference>
<comment type="function">
    <text evidence="1">One of the primary rRNA binding proteins. Required for association of the 30S and 50S subunits to form the 70S ribosome, for tRNA binding and peptide bond formation. It has been suggested to have peptidyltransferase activity; this is somewhat controversial. Makes several contacts with the 16S rRNA in the 70S ribosome.</text>
</comment>
<comment type="subunit">
    <text evidence="1">Part of the 50S ribosomal subunit. Forms a bridge to the 30S subunit in the 70S ribosome.</text>
</comment>
<comment type="similarity">
    <text evidence="1">Belongs to the universal ribosomal protein uL2 family.</text>
</comment>
<accession>P60435</accession>
<accession>Q9A1X1</accession>